<keyword id="KW-0210">Decarboxylase</keyword>
<keyword id="KW-0456">Lyase</keyword>
<keyword id="KW-0665">Pyrimidine biosynthesis</keyword>
<sequence length="245" mass="26256">MTFTASSSSCAITESPVVVALDYHERDKALAFVDKIDPRDCRLKVGKEMFTLFGPQLVRDLQQRGFDVFLDLKFHDIPNTTARAVAAAADLGVWMVNVHASGGARMMAAARDALAPFSKDAPLLIAVTVLTSMGTSDLHDLGVTLSPAEHAERLARLTQQCGLDGVVCSAQEAVRFKQAFGAAFKLVTPGIRPAGSEAGDQRRIMTPEQALSAGVDYMVIGRPVTQSVDPAQTLKDINASLKREA</sequence>
<gene>
    <name evidence="1" type="primary">pyrF</name>
    <name type="ordered locus">STY1344</name>
    <name type="ordered locus">t1620</name>
</gene>
<protein>
    <recommendedName>
        <fullName evidence="1">Orotidine 5'-phosphate decarboxylase</fullName>
        <ecNumber evidence="1">4.1.1.23</ecNumber>
    </recommendedName>
    <alternativeName>
        <fullName evidence="1">OMP decarboxylase</fullName>
        <shortName evidence="1">OMPDCase</shortName>
        <shortName evidence="1">OMPdecase</shortName>
    </alternativeName>
</protein>
<name>PYRF_SALTI</name>
<accession>P58643</accession>
<dbReference type="EC" id="4.1.1.23" evidence="1"/>
<dbReference type="EMBL" id="AL513382">
    <property type="protein sequence ID" value="CAD08424.1"/>
    <property type="molecule type" value="Genomic_DNA"/>
</dbReference>
<dbReference type="EMBL" id="AE014613">
    <property type="protein sequence ID" value="AAO69247.1"/>
    <property type="molecule type" value="Genomic_DNA"/>
</dbReference>
<dbReference type="RefSeq" id="NP_455790.1">
    <property type="nucleotide sequence ID" value="NC_003198.1"/>
</dbReference>
<dbReference type="RefSeq" id="WP_001763993.1">
    <property type="nucleotide sequence ID" value="NZ_WSUR01000006.1"/>
</dbReference>
<dbReference type="SMR" id="P58643"/>
<dbReference type="STRING" id="220341.gene:17585304"/>
<dbReference type="KEGG" id="stt:t1620"/>
<dbReference type="KEGG" id="sty:STY1344"/>
<dbReference type="PATRIC" id="fig|220341.7.peg.1353"/>
<dbReference type="eggNOG" id="COG0284">
    <property type="taxonomic scope" value="Bacteria"/>
</dbReference>
<dbReference type="HOGENOM" id="CLU_067069_0_0_6"/>
<dbReference type="OMA" id="FWKVGLE"/>
<dbReference type="OrthoDB" id="9806203at2"/>
<dbReference type="UniPathway" id="UPA00070">
    <property type="reaction ID" value="UER00120"/>
</dbReference>
<dbReference type="Proteomes" id="UP000000541">
    <property type="component" value="Chromosome"/>
</dbReference>
<dbReference type="Proteomes" id="UP000002670">
    <property type="component" value="Chromosome"/>
</dbReference>
<dbReference type="GO" id="GO:0005829">
    <property type="term" value="C:cytosol"/>
    <property type="evidence" value="ECO:0007669"/>
    <property type="project" value="TreeGrafter"/>
</dbReference>
<dbReference type="GO" id="GO:0004590">
    <property type="term" value="F:orotidine-5'-phosphate decarboxylase activity"/>
    <property type="evidence" value="ECO:0007669"/>
    <property type="project" value="UniProtKB-UniRule"/>
</dbReference>
<dbReference type="GO" id="GO:0006207">
    <property type="term" value="P:'de novo' pyrimidine nucleobase biosynthetic process"/>
    <property type="evidence" value="ECO:0007669"/>
    <property type="project" value="InterPro"/>
</dbReference>
<dbReference type="GO" id="GO:0044205">
    <property type="term" value="P:'de novo' UMP biosynthetic process"/>
    <property type="evidence" value="ECO:0007669"/>
    <property type="project" value="UniProtKB-UniRule"/>
</dbReference>
<dbReference type="CDD" id="cd04725">
    <property type="entry name" value="OMP_decarboxylase_like"/>
    <property type="match status" value="1"/>
</dbReference>
<dbReference type="FunFam" id="3.20.20.70:FF:000015">
    <property type="entry name" value="Orotidine 5'-phosphate decarboxylase"/>
    <property type="match status" value="1"/>
</dbReference>
<dbReference type="Gene3D" id="3.20.20.70">
    <property type="entry name" value="Aldolase class I"/>
    <property type="match status" value="1"/>
</dbReference>
<dbReference type="HAMAP" id="MF_01200_B">
    <property type="entry name" value="OMPdecase_type1_B"/>
    <property type="match status" value="1"/>
</dbReference>
<dbReference type="InterPro" id="IPR013785">
    <property type="entry name" value="Aldolase_TIM"/>
</dbReference>
<dbReference type="InterPro" id="IPR014732">
    <property type="entry name" value="OMPdecase"/>
</dbReference>
<dbReference type="InterPro" id="IPR018089">
    <property type="entry name" value="OMPdecase_AS"/>
</dbReference>
<dbReference type="InterPro" id="IPR047596">
    <property type="entry name" value="OMPdecase_bac"/>
</dbReference>
<dbReference type="InterPro" id="IPR001754">
    <property type="entry name" value="OMPdeCOase_dom"/>
</dbReference>
<dbReference type="InterPro" id="IPR011060">
    <property type="entry name" value="RibuloseP-bd_barrel"/>
</dbReference>
<dbReference type="NCBIfam" id="NF001273">
    <property type="entry name" value="PRK00230.1"/>
    <property type="match status" value="1"/>
</dbReference>
<dbReference type="NCBIfam" id="TIGR01740">
    <property type="entry name" value="pyrF"/>
    <property type="match status" value="1"/>
</dbReference>
<dbReference type="PANTHER" id="PTHR32119">
    <property type="entry name" value="OROTIDINE 5'-PHOSPHATE DECARBOXYLASE"/>
    <property type="match status" value="1"/>
</dbReference>
<dbReference type="PANTHER" id="PTHR32119:SF2">
    <property type="entry name" value="OROTIDINE 5'-PHOSPHATE DECARBOXYLASE"/>
    <property type="match status" value="1"/>
</dbReference>
<dbReference type="Pfam" id="PF00215">
    <property type="entry name" value="OMPdecase"/>
    <property type="match status" value="1"/>
</dbReference>
<dbReference type="SMART" id="SM00934">
    <property type="entry name" value="OMPdecase"/>
    <property type="match status" value="1"/>
</dbReference>
<dbReference type="SUPFAM" id="SSF51366">
    <property type="entry name" value="Ribulose-phoshate binding barrel"/>
    <property type="match status" value="1"/>
</dbReference>
<dbReference type="PROSITE" id="PS00156">
    <property type="entry name" value="OMPDECASE"/>
    <property type="match status" value="1"/>
</dbReference>
<organism>
    <name type="scientific">Salmonella typhi</name>
    <dbReference type="NCBI Taxonomy" id="90370"/>
    <lineage>
        <taxon>Bacteria</taxon>
        <taxon>Pseudomonadati</taxon>
        <taxon>Pseudomonadota</taxon>
        <taxon>Gammaproteobacteria</taxon>
        <taxon>Enterobacterales</taxon>
        <taxon>Enterobacteriaceae</taxon>
        <taxon>Salmonella</taxon>
    </lineage>
</organism>
<evidence type="ECO:0000255" key="1">
    <source>
        <dbReference type="HAMAP-Rule" id="MF_01200"/>
    </source>
</evidence>
<proteinExistence type="inferred from homology"/>
<comment type="function">
    <text evidence="1">Catalyzes the decarboxylation of orotidine 5'-monophosphate (OMP) to uridine 5'-monophosphate (UMP).</text>
</comment>
<comment type="catalytic activity">
    <reaction evidence="1">
        <text>orotidine 5'-phosphate + H(+) = UMP + CO2</text>
        <dbReference type="Rhea" id="RHEA:11596"/>
        <dbReference type="ChEBI" id="CHEBI:15378"/>
        <dbReference type="ChEBI" id="CHEBI:16526"/>
        <dbReference type="ChEBI" id="CHEBI:57538"/>
        <dbReference type="ChEBI" id="CHEBI:57865"/>
        <dbReference type="EC" id="4.1.1.23"/>
    </reaction>
</comment>
<comment type="pathway">
    <text evidence="1">Pyrimidine metabolism; UMP biosynthesis via de novo pathway; UMP from orotate: step 2/2.</text>
</comment>
<comment type="subunit">
    <text evidence="1">Homodimer.</text>
</comment>
<comment type="similarity">
    <text evidence="1">Belongs to the OMP decarboxylase family. Type 1 subfamily.</text>
</comment>
<feature type="chain" id="PRO_0000134570" description="Orotidine 5'-phosphate decarboxylase">
    <location>
        <begin position="1"/>
        <end position="245"/>
    </location>
</feature>
<feature type="active site" description="Proton donor" evidence="1">
    <location>
        <position position="73"/>
    </location>
</feature>
<feature type="binding site" evidence="1">
    <location>
        <position position="22"/>
    </location>
    <ligand>
        <name>substrate</name>
    </ligand>
</feature>
<feature type="binding site" evidence="1">
    <location>
        <position position="44"/>
    </location>
    <ligand>
        <name>substrate</name>
    </ligand>
</feature>
<feature type="binding site" evidence="1">
    <location>
        <begin position="71"/>
        <end position="80"/>
    </location>
    <ligand>
        <name>substrate</name>
    </ligand>
</feature>
<feature type="binding site" evidence="1">
    <location>
        <position position="131"/>
    </location>
    <ligand>
        <name>substrate</name>
    </ligand>
</feature>
<feature type="binding site" evidence="1">
    <location>
        <position position="192"/>
    </location>
    <ligand>
        <name>substrate</name>
    </ligand>
</feature>
<feature type="binding site" evidence="1">
    <location>
        <position position="201"/>
    </location>
    <ligand>
        <name>substrate</name>
    </ligand>
</feature>
<feature type="binding site" evidence="1">
    <location>
        <position position="221"/>
    </location>
    <ligand>
        <name>substrate</name>
    </ligand>
</feature>
<feature type="binding site" evidence="1">
    <location>
        <position position="222"/>
    </location>
    <ligand>
        <name>substrate</name>
    </ligand>
</feature>
<reference key="1">
    <citation type="journal article" date="2001" name="Nature">
        <title>Complete genome sequence of a multiple drug resistant Salmonella enterica serovar Typhi CT18.</title>
        <authorList>
            <person name="Parkhill J."/>
            <person name="Dougan G."/>
            <person name="James K.D."/>
            <person name="Thomson N.R."/>
            <person name="Pickard D."/>
            <person name="Wain J."/>
            <person name="Churcher C.M."/>
            <person name="Mungall K.L."/>
            <person name="Bentley S.D."/>
            <person name="Holden M.T.G."/>
            <person name="Sebaihia M."/>
            <person name="Baker S."/>
            <person name="Basham D."/>
            <person name="Brooks K."/>
            <person name="Chillingworth T."/>
            <person name="Connerton P."/>
            <person name="Cronin A."/>
            <person name="Davis P."/>
            <person name="Davies R.M."/>
            <person name="Dowd L."/>
            <person name="White N."/>
            <person name="Farrar J."/>
            <person name="Feltwell T."/>
            <person name="Hamlin N."/>
            <person name="Haque A."/>
            <person name="Hien T.T."/>
            <person name="Holroyd S."/>
            <person name="Jagels K."/>
            <person name="Krogh A."/>
            <person name="Larsen T.S."/>
            <person name="Leather S."/>
            <person name="Moule S."/>
            <person name="O'Gaora P."/>
            <person name="Parry C."/>
            <person name="Quail M.A."/>
            <person name="Rutherford K.M."/>
            <person name="Simmonds M."/>
            <person name="Skelton J."/>
            <person name="Stevens K."/>
            <person name="Whitehead S."/>
            <person name="Barrell B.G."/>
        </authorList>
    </citation>
    <scope>NUCLEOTIDE SEQUENCE [LARGE SCALE GENOMIC DNA]</scope>
    <source>
        <strain>CT18</strain>
    </source>
</reference>
<reference key="2">
    <citation type="journal article" date="2003" name="J. Bacteriol.">
        <title>Comparative genomics of Salmonella enterica serovar Typhi strains Ty2 and CT18.</title>
        <authorList>
            <person name="Deng W."/>
            <person name="Liou S.-R."/>
            <person name="Plunkett G. III"/>
            <person name="Mayhew G.F."/>
            <person name="Rose D.J."/>
            <person name="Burland V."/>
            <person name="Kodoyianni V."/>
            <person name="Schwartz D.C."/>
            <person name="Blattner F.R."/>
        </authorList>
    </citation>
    <scope>NUCLEOTIDE SEQUENCE [LARGE SCALE GENOMIC DNA]</scope>
    <source>
        <strain>ATCC 700931 / Ty2</strain>
    </source>
</reference>